<evidence type="ECO:0000250" key="1"/>
<evidence type="ECO:0000305" key="2"/>
<organism>
    <name type="scientific">Rickettsia felis (strain ATCC VR-1525 / URRWXCal2)</name>
    <name type="common">Rickettsia azadi</name>
    <dbReference type="NCBI Taxonomy" id="315456"/>
    <lineage>
        <taxon>Bacteria</taxon>
        <taxon>Pseudomonadati</taxon>
        <taxon>Pseudomonadota</taxon>
        <taxon>Alphaproteobacteria</taxon>
        <taxon>Rickettsiales</taxon>
        <taxon>Rickettsiaceae</taxon>
        <taxon>Rickettsieae</taxon>
        <taxon>Rickettsia</taxon>
        <taxon>spotted fever group</taxon>
    </lineage>
</organism>
<reference key="1">
    <citation type="journal article" date="2005" name="PLoS Biol.">
        <title>The genome sequence of Rickettsia felis identifies the first putative conjugative plasmid in an obligate intracellular parasite.</title>
        <authorList>
            <person name="Ogata H."/>
            <person name="Renesto P."/>
            <person name="Audic S."/>
            <person name="Robert C."/>
            <person name="Blanc G."/>
            <person name="Fournier P.-E."/>
            <person name="Parinello H."/>
            <person name="Claverie J.-M."/>
            <person name="Raoult D."/>
        </authorList>
    </citation>
    <scope>NUCLEOTIDE SEQUENCE [LARGE SCALE GENOMIC DNA]</scope>
    <source>
        <strain>ATCC VR-1525 / URRWXCal2</strain>
    </source>
</reference>
<keyword id="KW-0275">Fatty acid biosynthesis</keyword>
<keyword id="KW-0276">Fatty acid metabolism</keyword>
<keyword id="KW-0444">Lipid biosynthesis</keyword>
<keyword id="KW-0443">Lipid metabolism</keyword>
<keyword id="KW-0520">NAD</keyword>
<keyword id="KW-0560">Oxidoreductase</keyword>
<dbReference type="EC" id="1.3.1.9"/>
<dbReference type="EMBL" id="CP000053">
    <property type="protein sequence ID" value="AAY61426.1"/>
    <property type="molecule type" value="Genomic_DNA"/>
</dbReference>
<dbReference type="SMR" id="Q4ULZ7"/>
<dbReference type="STRING" id="315456.RF_0575"/>
<dbReference type="KEGG" id="rfe:RF_0575"/>
<dbReference type="eggNOG" id="COG0623">
    <property type="taxonomic scope" value="Bacteria"/>
</dbReference>
<dbReference type="HOGENOM" id="CLU_010194_10_1_5"/>
<dbReference type="OrthoDB" id="9803628at2"/>
<dbReference type="UniPathway" id="UPA00094"/>
<dbReference type="Proteomes" id="UP000008548">
    <property type="component" value="Chromosome"/>
</dbReference>
<dbReference type="GO" id="GO:0004318">
    <property type="term" value="F:enoyl-[acyl-carrier-protein] reductase (NADH) activity"/>
    <property type="evidence" value="ECO:0000250"/>
    <property type="project" value="UniProtKB"/>
</dbReference>
<dbReference type="GO" id="GO:0042802">
    <property type="term" value="F:identical protein binding"/>
    <property type="evidence" value="ECO:0000250"/>
    <property type="project" value="UniProtKB"/>
</dbReference>
<dbReference type="GO" id="GO:0030497">
    <property type="term" value="P:fatty acid elongation"/>
    <property type="evidence" value="ECO:0000250"/>
    <property type="project" value="UniProtKB"/>
</dbReference>
<dbReference type="CDD" id="cd05372">
    <property type="entry name" value="ENR_SDR"/>
    <property type="match status" value="1"/>
</dbReference>
<dbReference type="FunFam" id="1.10.8.400:FF:000001">
    <property type="entry name" value="Enoyl-[acyl-carrier-protein] reductase [NADH]"/>
    <property type="match status" value="1"/>
</dbReference>
<dbReference type="FunFam" id="3.40.50.720:FF:000054">
    <property type="entry name" value="Enoyl-[acyl-carrier-protein] reductase [NADH]"/>
    <property type="match status" value="1"/>
</dbReference>
<dbReference type="Gene3D" id="1.10.8.400">
    <property type="entry name" value="Enoyl acyl carrier protein reductase"/>
    <property type="match status" value="1"/>
</dbReference>
<dbReference type="Gene3D" id="3.40.50.720">
    <property type="entry name" value="NAD(P)-binding Rossmann-like Domain"/>
    <property type="match status" value="1"/>
</dbReference>
<dbReference type="InterPro" id="IPR014358">
    <property type="entry name" value="Enoyl-ACP_Rdtase_NADH"/>
</dbReference>
<dbReference type="InterPro" id="IPR036291">
    <property type="entry name" value="NAD(P)-bd_dom_sf"/>
</dbReference>
<dbReference type="InterPro" id="IPR002347">
    <property type="entry name" value="SDR_fam"/>
</dbReference>
<dbReference type="NCBIfam" id="NF005145">
    <property type="entry name" value="PRK06603.1"/>
    <property type="match status" value="1"/>
</dbReference>
<dbReference type="PANTHER" id="PTHR43159">
    <property type="entry name" value="ENOYL-[ACYL-CARRIER-PROTEIN] REDUCTASE"/>
    <property type="match status" value="1"/>
</dbReference>
<dbReference type="PANTHER" id="PTHR43159:SF2">
    <property type="entry name" value="ENOYL-[ACYL-CARRIER-PROTEIN] REDUCTASE [NADH], CHLOROPLASTIC"/>
    <property type="match status" value="1"/>
</dbReference>
<dbReference type="Pfam" id="PF13561">
    <property type="entry name" value="adh_short_C2"/>
    <property type="match status" value="1"/>
</dbReference>
<dbReference type="PIRSF" id="PIRSF000094">
    <property type="entry name" value="Enoyl-ACP_rdct"/>
    <property type="match status" value="1"/>
</dbReference>
<dbReference type="PRINTS" id="PR00081">
    <property type="entry name" value="GDHRDH"/>
</dbReference>
<dbReference type="SUPFAM" id="SSF51735">
    <property type="entry name" value="NAD(P)-binding Rossmann-fold domains"/>
    <property type="match status" value="1"/>
</dbReference>
<comment type="function">
    <text evidence="1">Catalyzes the reduction of a carbon-carbon double bond in an enoyl moiety that is covalently linked to an acyl carrier protein (ACP). Involved in the elongation cycle of fatty acid which are used in the lipid metabolism (By similarity).</text>
</comment>
<comment type="catalytic activity">
    <reaction>
        <text>a 2,3-saturated acyl-[ACP] + NAD(+) = a (2E)-enoyl-[ACP] + NADH + H(+)</text>
        <dbReference type="Rhea" id="RHEA:10240"/>
        <dbReference type="Rhea" id="RHEA-COMP:9925"/>
        <dbReference type="Rhea" id="RHEA-COMP:9926"/>
        <dbReference type="ChEBI" id="CHEBI:15378"/>
        <dbReference type="ChEBI" id="CHEBI:57540"/>
        <dbReference type="ChEBI" id="CHEBI:57945"/>
        <dbReference type="ChEBI" id="CHEBI:78784"/>
        <dbReference type="ChEBI" id="CHEBI:78785"/>
        <dbReference type="EC" id="1.3.1.9"/>
    </reaction>
</comment>
<comment type="pathway">
    <text>Lipid metabolism; fatty acid biosynthesis.</text>
</comment>
<comment type="subunit">
    <text evidence="1">Homotetramer.</text>
</comment>
<comment type="similarity">
    <text evidence="2">Belongs to the short-chain dehydrogenases/reductases (SDR) family. FabI subfamily.</text>
</comment>
<protein>
    <recommendedName>
        <fullName>Enoyl-[acyl-carrier-protein] reductase [NADH] FabI</fullName>
        <shortName>ENR</shortName>
        <ecNumber>1.3.1.9</ecNumber>
    </recommendedName>
    <alternativeName>
        <fullName>NADH-dependent enoyl-ACP reductase</fullName>
    </alternativeName>
</protein>
<gene>
    <name type="primary">fabI</name>
    <name type="ordered locus">RF_0575</name>
</gene>
<name>FABI_RICFE</name>
<feature type="chain" id="PRO_0000286636" description="Enoyl-[acyl-carrier-protein] reductase [NADH] FabI">
    <location>
        <begin position="1"/>
        <end position="260"/>
    </location>
</feature>
<feature type="active site" description="Proton acceptor" evidence="1">
    <location>
        <position position="147"/>
    </location>
</feature>
<feature type="active site" description="Proton acceptor" evidence="1">
    <location>
        <position position="157"/>
    </location>
</feature>
<feature type="binding site" evidence="1">
    <location>
        <position position="15"/>
    </location>
    <ligand>
        <name>NAD(+)</name>
        <dbReference type="ChEBI" id="CHEBI:57540"/>
    </ligand>
</feature>
<feature type="binding site" evidence="1">
    <location>
        <begin position="21"/>
        <end position="22"/>
    </location>
    <ligand>
        <name>NAD(+)</name>
        <dbReference type="ChEBI" id="CHEBI:57540"/>
    </ligand>
</feature>
<feature type="binding site" evidence="1">
    <location>
        <position position="42"/>
    </location>
    <ligand>
        <name>NAD(+)</name>
        <dbReference type="ChEBI" id="CHEBI:57540"/>
    </ligand>
</feature>
<feature type="binding site" evidence="1">
    <location>
        <begin position="66"/>
        <end position="67"/>
    </location>
    <ligand>
        <name>NAD(+)</name>
        <dbReference type="ChEBI" id="CHEBI:57540"/>
    </ligand>
</feature>
<feature type="binding site" evidence="1">
    <location>
        <position position="94"/>
    </location>
    <ligand>
        <name>NAD(+)</name>
        <dbReference type="ChEBI" id="CHEBI:57540"/>
    </ligand>
</feature>
<feature type="binding site" evidence="1">
    <location>
        <position position="97"/>
    </location>
    <ligand>
        <name>substrate</name>
    </ligand>
</feature>
<feature type="binding site" evidence="1">
    <location>
        <position position="164"/>
    </location>
    <ligand>
        <name>NAD(+)</name>
        <dbReference type="ChEBI" id="CHEBI:57540"/>
    </ligand>
</feature>
<feature type="binding site" evidence="1">
    <location>
        <begin position="193"/>
        <end position="197"/>
    </location>
    <ligand>
        <name>NAD(+)</name>
        <dbReference type="ChEBI" id="CHEBI:57540"/>
    </ligand>
</feature>
<proteinExistence type="inferred from homology"/>
<sequence length="260" mass="28254">MTTGLLQGKKGLITGIANNMSISWAIAQLAKKHGAELWFTYQSEVLEKRVKPLAEEIGCNFVSELDVTNPKSISNLFDDIKEKWGSFDFLLHGMAFADKNELKGRYVDTSLENFHNSLHISCYSLLELSRSAEALMHDGGSIVTLTYYGAEKVIPNYNVMGISKAALEASVKYLATDLGENNIRVNAISAGPIKTLASSAIGDFSTMLKSHAATAPLKRNTTQEDVGGAAVYLFSNLSKGVTGEIHYVDCGYNIMGSNKL</sequence>
<accession>Q4ULZ7</accession>